<comment type="similarity">
    <text evidence="1">Belongs to the bacterial ribosomal protein bL36 family.</text>
</comment>
<name>RL36_STRSV</name>
<feature type="chain" id="PRO_0000302313" description="Large ribosomal subunit protein bL36">
    <location>
        <begin position="1"/>
        <end position="38"/>
    </location>
</feature>
<evidence type="ECO:0000255" key="1">
    <source>
        <dbReference type="HAMAP-Rule" id="MF_00251"/>
    </source>
</evidence>
<evidence type="ECO:0000305" key="2"/>
<sequence length="38" mass="4421">MKVRPSVKPICEYCKVIRRNGRVMVICPANPKHKQRQG</sequence>
<reference key="1">
    <citation type="journal article" date="2007" name="J. Bacteriol.">
        <title>Genome of the opportunistic pathogen Streptococcus sanguinis.</title>
        <authorList>
            <person name="Xu P."/>
            <person name="Alves J.M."/>
            <person name="Kitten T."/>
            <person name="Brown A."/>
            <person name="Chen Z."/>
            <person name="Ozaki L.S."/>
            <person name="Manque P."/>
            <person name="Ge X."/>
            <person name="Serrano M.G."/>
            <person name="Puiu D."/>
            <person name="Hendricks S."/>
            <person name="Wang Y."/>
            <person name="Chaplin M.D."/>
            <person name="Akan D."/>
            <person name="Paik S."/>
            <person name="Peterson D.L."/>
            <person name="Macrina F.L."/>
            <person name="Buck G.A."/>
        </authorList>
    </citation>
    <scope>NUCLEOTIDE SEQUENCE [LARGE SCALE GENOMIC DNA]</scope>
    <source>
        <strain>SK36</strain>
    </source>
</reference>
<accession>A3CK87</accession>
<keyword id="KW-1185">Reference proteome</keyword>
<keyword id="KW-0687">Ribonucleoprotein</keyword>
<keyword id="KW-0689">Ribosomal protein</keyword>
<organism>
    <name type="scientific">Streptococcus sanguinis (strain SK36)</name>
    <dbReference type="NCBI Taxonomy" id="388919"/>
    <lineage>
        <taxon>Bacteria</taxon>
        <taxon>Bacillati</taxon>
        <taxon>Bacillota</taxon>
        <taxon>Bacilli</taxon>
        <taxon>Lactobacillales</taxon>
        <taxon>Streptococcaceae</taxon>
        <taxon>Streptococcus</taxon>
    </lineage>
</organism>
<proteinExistence type="inferred from homology"/>
<dbReference type="EMBL" id="CP000387">
    <property type="protein sequence ID" value="ABN43592.1"/>
    <property type="molecule type" value="Genomic_DNA"/>
</dbReference>
<dbReference type="RefSeq" id="WP_001808836.1">
    <property type="nucleotide sequence ID" value="NZ_CAXTYR010000005.1"/>
</dbReference>
<dbReference type="RefSeq" id="YP_001034142.1">
    <property type="nucleotide sequence ID" value="NC_009009.1"/>
</dbReference>
<dbReference type="SMR" id="A3CK87"/>
<dbReference type="STRING" id="388919.SSA_2392"/>
<dbReference type="GeneID" id="93964224"/>
<dbReference type="KEGG" id="ssa:SSA_2392"/>
<dbReference type="PATRIC" id="fig|388919.9.peg.124"/>
<dbReference type="eggNOG" id="COG0257">
    <property type="taxonomic scope" value="Bacteria"/>
</dbReference>
<dbReference type="HOGENOM" id="CLU_135723_6_2_9"/>
<dbReference type="OrthoDB" id="9802520at2"/>
<dbReference type="Proteomes" id="UP000002148">
    <property type="component" value="Chromosome"/>
</dbReference>
<dbReference type="GO" id="GO:0005737">
    <property type="term" value="C:cytoplasm"/>
    <property type="evidence" value="ECO:0007669"/>
    <property type="project" value="UniProtKB-ARBA"/>
</dbReference>
<dbReference type="GO" id="GO:1990904">
    <property type="term" value="C:ribonucleoprotein complex"/>
    <property type="evidence" value="ECO:0007669"/>
    <property type="project" value="UniProtKB-KW"/>
</dbReference>
<dbReference type="GO" id="GO:0005840">
    <property type="term" value="C:ribosome"/>
    <property type="evidence" value="ECO:0007669"/>
    <property type="project" value="UniProtKB-KW"/>
</dbReference>
<dbReference type="GO" id="GO:0003735">
    <property type="term" value="F:structural constituent of ribosome"/>
    <property type="evidence" value="ECO:0007669"/>
    <property type="project" value="InterPro"/>
</dbReference>
<dbReference type="GO" id="GO:0006412">
    <property type="term" value="P:translation"/>
    <property type="evidence" value="ECO:0007669"/>
    <property type="project" value="UniProtKB-UniRule"/>
</dbReference>
<dbReference type="HAMAP" id="MF_00251">
    <property type="entry name" value="Ribosomal_bL36"/>
    <property type="match status" value="1"/>
</dbReference>
<dbReference type="InterPro" id="IPR000473">
    <property type="entry name" value="Ribosomal_bL36"/>
</dbReference>
<dbReference type="InterPro" id="IPR035977">
    <property type="entry name" value="Ribosomal_bL36_sp"/>
</dbReference>
<dbReference type="NCBIfam" id="TIGR01022">
    <property type="entry name" value="rpmJ_bact"/>
    <property type="match status" value="1"/>
</dbReference>
<dbReference type="PANTHER" id="PTHR42888">
    <property type="entry name" value="50S RIBOSOMAL PROTEIN L36, CHLOROPLASTIC"/>
    <property type="match status" value="1"/>
</dbReference>
<dbReference type="PANTHER" id="PTHR42888:SF1">
    <property type="entry name" value="LARGE RIBOSOMAL SUBUNIT PROTEIN BL36C"/>
    <property type="match status" value="1"/>
</dbReference>
<dbReference type="Pfam" id="PF00444">
    <property type="entry name" value="Ribosomal_L36"/>
    <property type="match status" value="1"/>
</dbReference>
<dbReference type="SUPFAM" id="SSF57840">
    <property type="entry name" value="Ribosomal protein L36"/>
    <property type="match status" value="1"/>
</dbReference>
<dbReference type="PROSITE" id="PS00828">
    <property type="entry name" value="RIBOSOMAL_L36"/>
    <property type="match status" value="1"/>
</dbReference>
<gene>
    <name evidence="1" type="primary">rpmJ</name>
    <name type="ordered locus">SSA_2392</name>
</gene>
<protein>
    <recommendedName>
        <fullName evidence="1">Large ribosomal subunit protein bL36</fullName>
    </recommendedName>
    <alternativeName>
        <fullName evidence="2">50S ribosomal protein L36</fullName>
    </alternativeName>
</protein>